<protein>
    <recommendedName>
        <fullName evidence="1">Dihydroxy-acid dehydratase</fullName>
        <shortName evidence="1">DAD</shortName>
        <ecNumber evidence="1">4.2.1.9</ecNumber>
    </recommendedName>
</protein>
<accession>B7L8B3</accession>
<feature type="chain" id="PRO_1000190663" description="Dihydroxy-acid dehydratase">
    <location>
        <begin position="1"/>
        <end position="616"/>
    </location>
</feature>
<feature type="active site" description="Proton acceptor" evidence="1">
    <location>
        <position position="517"/>
    </location>
</feature>
<feature type="binding site" evidence="1">
    <location>
        <position position="81"/>
    </location>
    <ligand>
        <name>Mg(2+)</name>
        <dbReference type="ChEBI" id="CHEBI:18420"/>
    </ligand>
</feature>
<feature type="binding site" evidence="1">
    <location>
        <position position="122"/>
    </location>
    <ligand>
        <name>[2Fe-2S] cluster</name>
        <dbReference type="ChEBI" id="CHEBI:190135"/>
    </ligand>
</feature>
<feature type="binding site" evidence="1">
    <location>
        <position position="123"/>
    </location>
    <ligand>
        <name>Mg(2+)</name>
        <dbReference type="ChEBI" id="CHEBI:18420"/>
    </ligand>
</feature>
<feature type="binding site" description="via carbamate group" evidence="1">
    <location>
        <position position="124"/>
    </location>
    <ligand>
        <name>Mg(2+)</name>
        <dbReference type="ChEBI" id="CHEBI:18420"/>
    </ligand>
</feature>
<feature type="binding site" evidence="1">
    <location>
        <position position="195"/>
    </location>
    <ligand>
        <name>[2Fe-2S] cluster</name>
        <dbReference type="ChEBI" id="CHEBI:190135"/>
    </ligand>
</feature>
<feature type="binding site" evidence="1">
    <location>
        <position position="491"/>
    </location>
    <ligand>
        <name>Mg(2+)</name>
        <dbReference type="ChEBI" id="CHEBI:18420"/>
    </ligand>
</feature>
<feature type="modified residue" description="N6-carboxylysine" evidence="1">
    <location>
        <position position="124"/>
    </location>
</feature>
<name>ILVD_ECO55</name>
<reference key="1">
    <citation type="journal article" date="2009" name="PLoS Genet.">
        <title>Organised genome dynamics in the Escherichia coli species results in highly diverse adaptive paths.</title>
        <authorList>
            <person name="Touchon M."/>
            <person name="Hoede C."/>
            <person name="Tenaillon O."/>
            <person name="Barbe V."/>
            <person name="Baeriswyl S."/>
            <person name="Bidet P."/>
            <person name="Bingen E."/>
            <person name="Bonacorsi S."/>
            <person name="Bouchier C."/>
            <person name="Bouvet O."/>
            <person name="Calteau A."/>
            <person name="Chiapello H."/>
            <person name="Clermont O."/>
            <person name="Cruveiller S."/>
            <person name="Danchin A."/>
            <person name="Diard M."/>
            <person name="Dossat C."/>
            <person name="Karoui M.E."/>
            <person name="Frapy E."/>
            <person name="Garry L."/>
            <person name="Ghigo J.M."/>
            <person name="Gilles A.M."/>
            <person name="Johnson J."/>
            <person name="Le Bouguenec C."/>
            <person name="Lescat M."/>
            <person name="Mangenot S."/>
            <person name="Martinez-Jehanne V."/>
            <person name="Matic I."/>
            <person name="Nassif X."/>
            <person name="Oztas S."/>
            <person name="Petit M.A."/>
            <person name="Pichon C."/>
            <person name="Rouy Z."/>
            <person name="Ruf C.S."/>
            <person name="Schneider D."/>
            <person name="Tourret J."/>
            <person name="Vacherie B."/>
            <person name="Vallenet D."/>
            <person name="Medigue C."/>
            <person name="Rocha E.P.C."/>
            <person name="Denamur E."/>
        </authorList>
    </citation>
    <scope>NUCLEOTIDE SEQUENCE [LARGE SCALE GENOMIC DNA]</scope>
    <source>
        <strain>55989 / EAEC</strain>
    </source>
</reference>
<evidence type="ECO:0000255" key="1">
    <source>
        <dbReference type="HAMAP-Rule" id="MF_00012"/>
    </source>
</evidence>
<organism>
    <name type="scientific">Escherichia coli (strain 55989 / EAEC)</name>
    <dbReference type="NCBI Taxonomy" id="585055"/>
    <lineage>
        <taxon>Bacteria</taxon>
        <taxon>Pseudomonadati</taxon>
        <taxon>Pseudomonadota</taxon>
        <taxon>Gammaproteobacteria</taxon>
        <taxon>Enterobacterales</taxon>
        <taxon>Enterobacteriaceae</taxon>
        <taxon>Escherichia</taxon>
    </lineage>
</organism>
<sequence>MPKYRSATTTHGRNMAGARALWRATGMTDADFGKPIIAVVNSFTQFVPGHVHLRDLGKLVAEQIEAAGGVAKEFNTIAVDDGIAMGHGGMLYSLPSRELIADSVEYMVNAHCADAMVCISNCDKITPGMLMASLRLNIPVIFVSGGPMEAGKTKLSDQIIKLDLVDAMIQGADPKVSDSQSDQVERSACPTCGSCSGMFTANSMNCLTEALGLSQPGNGSLLATHADRKQLFLNAGKRIVELTKRYYEQNDESALPRNIASKAAFENAMTLDIAMGGSTNTVLHLLAAAQEAEIDFTMSDIDKLSRKVPQLCKVAPSTQKYHMEDVHRAGGVIGILGELDRAGLLNRDVKNVLGLTLPQTLEQYDVMLTQDDAVKNMFRAGPAGIRTTQAFSQDCRWDSLDDDRANGCIRSLEHAYSKDGGLAVLYGNFAENGCIVKTAGVDDSILKFTGPAKVYESQDDAVEAILGGKVVAGDVVVIRYEGPKGGPGMQEMLYPTSFLKSMGLGKACALITDGRFSGGTSGLSIGHVSPEAASGGSIGLIEDGDLIAIDIPNRGIQLQVSDAELAARREAQDARGDKAWTPKNRERQVSFALRAYASLATSADKGAVRDKSKLGG</sequence>
<keyword id="KW-0001">2Fe-2S</keyword>
<keyword id="KW-0028">Amino-acid biosynthesis</keyword>
<keyword id="KW-0100">Branched-chain amino acid biosynthesis</keyword>
<keyword id="KW-0408">Iron</keyword>
<keyword id="KW-0411">Iron-sulfur</keyword>
<keyword id="KW-0456">Lyase</keyword>
<keyword id="KW-0460">Magnesium</keyword>
<keyword id="KW-0479">Metal-binding</keyword>
<keyword id="KW-1185">Reference proteome</keyword>
<dbReference type="EC" id="4.2.1.9" evidence="1"/>
<dbReference type="EMBL" id="CU928145">
    <property type="protein sequence ID" value="CAV00870.1"/>
    <property type="molecule type" value="Genomic_DNA"/>
</dbReference>
<dbReference type="RefSeq" id="WP_001127391.1">
    <property type="nucleotide sequence ID" value="NC_011748.1"/>
</dbReference>
<dbReference type="SMR" id="B7L8B3"/>
<dbReference type="KEGG" id="eck:EC55989_4243"/>
<dbReference type="HOGENOM" id="CLU_014271_4_2_6"/>
<dbReference type="UniPathway" id="UPA00047">
    <property type="reaction ID" value="UER00057"/>
</dbReference>
<dbReference type="UniPathway" id="UPA00049">
    <property type="reaction ID" value="UER00061"/>
</dbReference>
<dbReference type="Proteomes" id="UP000000746">
    <property type="component" value="Chromosome"/>
</dbReference>
<dbReference type="GO" id="GO:0005829">
    <property type="term" value="C:cytosol"/>
    <property type="evidence" value="ECO:0007669"/>
    <property type="project" value="TreeGrafter"/>
</dbReference>
<dbReference type="GO" id="GO:0051537">
    <property type="term" value="F:2 iron, 2 sulfur cluster binding"/>
    <property type="evidence" value="ECO:0007669"/>
    <property type="project" value="UniProtKB-UniRule"/>
</dbReference>
<dbReference type="GO" id="GO:0004160">
    <property type="term" value="F:dihydroxy-acid dehydratase activity"/>
    <property type="evidence" value="ECO:0007669"/>
    <property type="project" value="UniProtKB-UniRule"/>
</dbReference>
<dbReference type="GO" id="GO:0000287">
    <property type="term" value="F:magnesium ion binding"/>
    <property type="evidence" value="ECO:0007669"/>
    <property type="project" value="UniProtKB-UniRule"/>
</dbReference>
<dbReference type="GO" id="GO:0009097">
    <property type="term" value="P:isoleucine biosynthetic process"/>
    <property type="evidence" value="ECO:0007669"/>
    <property type="project" value="UniProtKB-UniRule"/>
</dbReference>
<dbReference type="GO" id="GO:0009099">
    <property type="term" value="P:L-valine biosynthetic process"/>
    <property type="evidence" value="ECO:0007669"/>
    <property type="project" value="UniProtKB-UniRule"/>
</dbReference>
<dbReference type="FunFam" id="3.50.30.80:FF:000001">
    <property type="entry name" value="Dihydroxy-acid dehydratase"/>
    <property type="match status" value="1"/>
</dbReference>
<dbReference type="Gene3D" id="3.50.30.80">
    <property type="entry name" value="IlvD/EDD C-terminal domain-like"/>
    <property type="match status" value="1"/>
</dbReference>
<dbReference type="HAMAP" id="MF_00012">
    <property type="entry name" value="IlvD"/>
    <property type="match status" value="1"/>
</dbReference>
<dbReference type="InterPro" id="IPR042096">
    <property type="entry name" value="Dihydro-acid_dehy_C"/>
</dbReference>
<dbReference type="InterPro" id="IPR004404">
    <property type="entry name" value="DihydroxyA_deHydtase"/>
</dbReference>
<dbReference type="InterPro" id="IPR020558">
    <property type="entry name" value="DiOHA_6PGluconate_deHydtase_CS"/>
</dbReference>
<dbReference type="InterPro" id="IPR056740">
    <property type="entry name" value="ILV_EDD_C"/>
</dbReference>
<dbReference type="InterPro" id="IPR000581">
    <property type="entry name" value="ILV_EDD_N"/>
</dbReference>
<dbReference type="InterPro" id="IPR037237">
    <property type="entry name" value="IlvD/EDD_N"/>
</dbReference>
<dbReference type="NCBIfam" id="TIGR00110">
    <property type="entry name" value="ilvD"/>
    <property type="match status" value="1"/>
</dbReference>
<dbReference type="NCBIfam" id="NF009103">
    <property type="entry name" value="PRK12448.1"/>
    <property type="match status" value="1"/>
</dbReference>
<dbReference type="PANTHER" id="PTHR43661">
    <property type="entry name" value="D-XYLONATE DEHYDRATASE"/>
    <property type="match status" value="1"/>
</dbReference>
<dbReference type="PANTHER" id="PTHR43661:SF3">
    <property type="entry name" value="D-XYLONATE DEHYDRATASE YAGF-RELATED"/>
    <property type="match status" value="1"/>
</dbReference>
<dbReference type="Pfam" id="PF24877">
    <property type="entry name" value="ILV_EDD_C"/>
    <property type="match status" value="1"/>
</dbReference>
<dbReference type="Pfam" id="PF00920">
    <property type="entry name" value="ILVD_EDD_N"/>
    <property type="match status" value="1"/>
</dbReference>
<dbReference type="SUPFAM" id="SSF143975">
    <property type="entry name" value="IlvD/EDD N-terminal domain-like"/>
    <property type="match status" value="1"/>
</dbReference>
<dbReference type="SUPFAM" id="SSF52016">
    <property type="entry name" value="LeuD/IlvD-like"/>
    <property type="match status" value="1"/>
</dbReference>
<dbReference type="PROSITE" id="PS00886">
    <property type="entry name" value="ILVD_EDD_1"/>
    <property type="match status" value="1"/>
</dbReference>
<dbReference type="PROSITE" id="PS00887">
    <property type="entry name" value="ILVD_EDD_2"/>
    <property type="match status" value="1"/>
</dbReference>
<gene>
    <name evidence="1" type="primary">ilvD</name>
    <name type="ordered locus">EC55989_4243</name>
</gene>
<proteinExistence type="inferred from homology"/>
<comment type="function">
    <text evidence="1">Functions in the biosynthesis of branched-chain amino acids. Catalyzes the dehydration of (2R,3R)-2,3-dihydroxy-3-methylpentanoate (2,3-dihydroxy-3-methylvalerate) into 2-oxo-3-methylpentanoate (2-oxo-3-methylvalerate) and of (2R)-2,3-dihydroxy-3-methylbutanoate (2,3-dihydroxyisovalerate) into 2-oxo-3-methylbutanoate (2-oxoisovalerate), the penultimate precursor to L-isoleucine and L-valine, respectively.</text>
</comment>
<comment type="catalytic activity">
    <reaction evidence="1">
        <text>(2R)-2,3-dihydroxy-3-methylbutanoate = 3-methyl-2-oxobutanoate + H2O</text>
        <dbReference type="Rhea" id="RHEA:24809"/>
        <dbReference type="ChEBI" id="CHEBI:11851"/>
        <dbReference type="ChEBI" id="CHEBI:15377"/>
        <dbReference type="ChEBI" id="CHEBI:49072"/>
        <dbReference type="EC" id="4.2.1.9"/>
    </reaction>
    <physiologicalReaction direction="left-to-right" evidence="1">
        <dbReference type="Rhea" id="RHEA:24810"/>
    </physiologicalReaction>
</comment>
<comment type="catalytic activity">
    <reaction evidence="1">
        <text>(2R,3R)-2,3-dihydroxy-3-methylpentanoate = (S)-3-methyl-2-oxopentanoate + H2O</text>
        <dbReference type="Rhea" id="RHEA:27694"/>
        <dbReference type="ChEBI" id="CHEBI:15377"/>
        <dbReference type="ChEBI" id="CHEBI:35146"/>
        <dbReference type="ChEBI" id="CHEBI:49258"/>
        <dbReference type="EC" id="4.2.1.9"/>
    </reaction>
    <physiologicalReaction direction="left-to-right" evidence="1">
        <dbReference type="Rhea" id="RHEA:27695"/>
    </physiologicalReaction>
</comment>
<comment type="cofactor">
    <cofactor evidence="1">
        <name>[2Fe-2S] cluster</name>
        <dbReference type="ChEBI" id="CHEBI:190135"/>
    </cofactor>
    <text evidence="1">Binds 1 [2Fe-2S] cluster per subunit. This cluster acts as a Lewis acid cofactor.</text>
</comment>
<comment type="cofactor">
    <cofactor evidence="1">
        <name>Mg(2+)</name>
        <dbReference type="ChEBI" id="CHEBI:18420"/>
    </cofactor>
</comment>
<comment type="pathway">
    <text evidence="1">Amino-acid biosynthesis; L-isoleucine biosynthesis; L-isoleucine from 2-oxobutanoate: step 3/4.</text>
</comment>
<comment type="pathway">
    <text evidence="1">Amino-acid biosynthesis; L-valine biosynthesis; L-valine from pyruvate: step 3/4.</text>
</comment>
<comment type="subunit">
    <text evidence="1">Homodimer.</text>
</comment>
<comment type="similarity">
    <text evidence="1">Belongs to the IlvD/Edd family.</text>
</comment>